<reference key="1">
    <citation type="journal article" date="1994" name="FEBS Lett.">
        <title>Molecular identification of catalases from Nicotiana plumbaginifolia (L.).</title>
        <authorList>
            <person name="Willekens H."/>
            <person name="Villarroel R."/>
            <person name="van Montagu M."/>
            <person name="Inze D."/>
            <person name="van Camp W."/>
        </authorList>
    </citation>
    <scope>NUCLEOTIDE SEQUENCE [MRNA]</scope>
    <source>
        <tissue>Leaf</tissue>
    </source>
</reference>
<protein>
    <recommendedName>
        <fullName>Catalase isozyme 1</fullName>
        <ecNumber>1.11.1.6</ecNumber>
    </recommendedName>
</protein>
<dbReference type="EC" id="1.11.1.6"/>
<dbReference type="EMBL" id="Z36975">
    <property type="protein sequence ID" value="CAA85424.1"/>
    <property type="molecule type" value="mRNA"/>
</dbReference>
<dbReference type="PIR" id="S48650">
    <property type="entry name" value="S48650"/>
</dbReference>
<dbReference type="SMR" id="P49315"/>
<dbReference type="GO" id="GO:0005777">
    <property type="term" value="C:peroxisome"/>
    <property type="evidence" value="ECO:0007669"/>
    <property type="project" value="UniProtKB-SubCell"/>
</dbReference>
<dbReference type="GO" id="GO:0004096">
    <property type="term" value="F:catalase activity"/>
    <property type="evidence" value="ECO:0007669"/>
    <property type="project" value="UniProtKB-EC"/>
</dbReference>
<dbReference type="GO" id="GO:0020037">
    <property type="term" value="F:heme binding"/>
    <property type="evidence" value="ECO:0007669"/>
    <property type="project" value="InterPro"/>
</dbReference>
<dbReference type="GO" id="GO:0046872">
    <property type="term" value="F:metal ion binding"/>
    <property type="evidence" value="ECO:0007669"/>
    <property type="project" value="UniProtKB-KW"/>
</dbReference>
<dbReference type="GO" id="GO:0042744">
    <property type="term" value="P:hydrogen peroxide catabolic process"/>
    <property type="evidence" value="ECO:0007669"/>
    <property type="project" value="UniProtKB-KW"/>
</dbReference>
<dbReference type="GO" id="GO:0042542">
    <property type="term" value="P:response to hydrogen peroxide"/>
    <property type="evidence" value="ECO:0007669"/>
    <property type="project" value="TreeGrafter"/>
</dbReference>
<dbReference type="CDD" id="cd08154">
    <property type="entry name" value="catalase_clade_1"/>
    <property type="match status" value="1"/>
</dbReference>
<dbReference type="FunFam" id="2.40.180.10:FF:000002">
    <property type="entry name" value="Catalase"/>
    <property type="match status" value="1"/>
</dbReference>
<dbReference type="Gene3D" id="2.40.180.10">
    <property type="entry name" value="Catalase core domain"/>
    <property type="match status" value="1"/>
</dbReference>
<dbReference type="InterPro" id="IPR018028">
    <property type="entry name" value="Catalase"/>
</dbReference>
<dbReference type="InterPro" id="IPR024708">
    <property type="entry name" value="Catalase_AS"/>
</dbReference>
<dbReference type="InterPro" id="IPR024711">
    <property type="entry name" value="Catalase_clade1/3"/>
</dbReference>
<dbReference type="InterPro" id="IPR011614">
    <property type="entry name" value="Catalase_core"/>
</dbReference>
<dbReference type="InterPro" id="IPR002226">
    <property type="entry name" value="Catalase_haem_BS"/>
</dbReference>
<dbReference type="InterPro" id="IPR010582">
    <property type="entry name" value="Catalase_immune_responsive"/>
</dbReference>
<dbReference type="InterPro" id="IPR020835">
    <property type="entry name" value="Catalase_sf"/>
</dbReference>
<dbReference type="PANTHER" id="PTHR11465">
    <property type="entry name" value="CATALASE"/>
    <property type="match status" value="1"/>
</dbReference>
<dbReference type="PANTHER" id="PTHR11465:SF41">
    <property type="entry name" value="CATALASE ISOZYME 2"/>
    <property type="match status" value="1"/>
</dbReference>
<dbReference type="Pfam" id="PF00199">
    <property type="entry name" value="Catalase"/>
    <property type="match status" value="1"/>
</dbReference>
<dbReference type="Pfam" id="PF06628">
    <property type="entry name" value="Catalase-rel"/>
    <property type="match status" value="1"/>
</dbReference>
<dbReference type="PIRSF" id="PIRSF038928">
    <property type="entry name" value="Catalase_clade1-3"/>
    <property type="match status" value="1"/>
</dbReference>
<dbReference type="PRINTS" id="PR00067">
    <property type="entry name" value="CATALASE"/>
</dbReference>
<dbReference type="SMART" id="SM01060">
    <property type="entry name" value="Catalase"/>
    <property type="match status" value="1"/>
</dbReference>
<dbReference type="SUPFAM" id="SSF56634">
    <property type="entry name" value="Heme-dependent catalase-like"/>
    <property type="match status" value="1"/>
</dbReference>
<dbReference type="PROSITE" id="PS00437">
    <property type="entry name" value="CATALASE_1"/>
    <property type="match status" value="1"/>
</dbReference>
<dbReference type="PROSITE" id="PS00438">
    <property type="entry name" value="CATALASE_2"/>
    <property type="match status" value="1"/>
</dbReference>
<dbReference type="PROSITE" id="PS51402">
    <property type="entry name" value="CATALASE_3"/>
    <property type="match status" value="1"/>
</dbReference>
<proteinExistence type="evidence at transcript level"/>
<sequence length="485" mass="55850">PSSAFNSPFCTTNSGAPVFNNNSSLTVGARGPVLLEDYHLVEKLANFDRERVPERVVHARGASAKGFFEVTHDITHLTCADFLRAPGVQTPVIVRFSTVIHERGSPETLRDPRGFAVKFYTREGNFDLVGNNFPVFFIRDGMKFPDMVHALKPNPKSHIQENWRVLDFFSHVPESLHMFTFLFDDIGIPQDYRHMDGSGVHTFTLINKAGKSTYVKFHWKPTCGVKSLLEDEAARVGGANHSHATQDLYDSIAAGNYPEWKLFIQTMDPDHEDRFDFDPLDVTKTWPEDILPLQPVGRLVLNKNIDNFSNENEQLAFCPSIVVPGVYYSDDKMLQTRIFSYSDTQRYRLGPNYLQLPANAPKCAHHNNHYDGSMNFMHRDEEIDYFPSRYDPVRHAEKYPIPSTMCTGKREKCVIQKENNFKQPGERYRSFTPDRQERFIRRWVETLSDPRITYEIRSIWISYWSQADKSLGQKLASRLNVRPSI</sequence>
<name>CATA1_NICPL</name>
<feature type="chain" id="PRO_0000084949" description="Catalase isozyme 1">
    <location>
        <begin position="1" status="less than"/>
        <end position="485"/>
    </location>
</feature>
<feature type="active site" evidence="2">
    <location>
        <position position="58"/>
    </location>
</feature>
<feature type="active site" evidence="2">
    <location>
        <position position="131"/>
    </location>
</feature>
<feature type="binding site" description="axial binding residue" evidence="1">
    <location>
        <position position="341"/>
    </location>
    <ligand>
        <name>heme</name>
        <dbReference type="ChEBI" id="CHEBI:30413"/>
    </ligand>
    <ligandPart>
        <name>Fe</name>
        <dbReference type="ChEBI" id="CHEBI:18248"/>
    </ligandPart>
</feature>
<feature type="non-terminal residue">
    <location>
        <position position="1"/>
    </location>
</feature>
<keyword id="KW-0349">Heme</keyword>
<keyword id="KW-0376">Hydrogen peroxide</keyword>
<keyword id="KW-0408">Iron</keyword>
<keyword id="KW-0479">Metal-binding</keyword>
<keyword id="KW-0560">Oxidoreductase</keyword>
<keyword id="KW-0575">Peroxidase</keyword>
<keyword id="KW-0576">Peroxisome</keyword>
<evidence type="ECO:0000250" key="1"/>
<evidence type="ECO:0000255" key="2">
    <source>
        <dbReference type="PROSITE-ProRule" id="PRU10013"/>
    </source>
</evidence>
<evidence type="ECO:0000305" key="3"/>
<gene>
    <name type="primary">CAT1</name>
</gene>
<comment type="function">
    <text>Occurs in almost all aerobically respiring organisms and serves to protect cells from the toxic effects of hydrogen peroxide.</text>
</comment>
<comment type="catalytic activity">
    <reaction evidence="2">
        <text>2 H2O2 = O2 + 2 H2O</text>
        <dbReference type="Rhea" id="RHEA:20309"/>
        <dbReference type="ChEBI" id="CHEBI:15377"/>
        <dbReference type="ChEBI" id="CHEBI:15379"/>
        <dbReference type="ChEBI" id="CHEBI:16240"/>
        <dbReference type="EC" id="1.11.1.6"/>
    </reaction>
</comment>
<comment type="cofactor">
    <cofactor>
        <name>heme</name>
        <dbReference type="ChEBI" id="CHEBI:30413"/>
    </cofactor>
</comment>
<comment type="subunit">
    <text evidence="1">Homotetramer.</text>
</comment>
<comment type="subcellular location">
    <subcellularLocation>
        <location evidence="3">Peroxisome</location>
    </subcellularLocation>
</comment>
<comment type="induction">
    <text>By paraquat and 3-aminotriazole.</text>
</comment>
<comment type="similarity">
    <text evidence="3">Belongs to the catalase family.</text>
</comment>
<organism>
    <name type="scientific">Nicotiana plumbaginifolia</name>
    <name type="common">Leadwort-leaved tobacco</name>
    <name type="synonym">Tex-Mex tobacco</name>
    <dbReference type="NCBI Taxonomy" id="4092"/>
    <lineage>
        <taxon>Eukaryota</taxon>
        <taxon>Viridiplantae</taxon>
        <taxon>Streptophyta</taxon>
        <taxon>Embryophyta</taxon>
        <taxon>Tracheophyta</taxon>
        <taxon>Spermatophyta</taxon>
        <taxon>Magnoliopsida</taxon>
        <taxon>eudicotyledons</taxon>
        <taxon>Gunneridae</taxon>
        <taxon>Pentapetalae</taxon>
        <taxon>asterids</taxon>
        <taxon>lamiids</taxon>
        <taxon>Solanales</taxon>
        <taxon>Solanaceae</taxon>
        <taxon>Nicotianoideae</taxon>
        <taxon>Nicotianeae</taxon>
        <taxon>Nicotiana</taxon>
    </lineage>
</organism>
<accession>P49315</accession>